<dbReference type="EC" id="3.6.4.13"/>
<dbReference type="EMBL" id="AE014296">
    <property type="protein sequence ID" value="AAF51884.1"/>
    <property type="molecule type" value="Genomic_DNA"/>
</dbReference>
<dbReference type="EMBL" id="BT010084">
    <property type="protein sequence ID" value="AAQ22553.1"/>
    <property type="molecule type" value="mRNA"/>
</dbReference>
<dbReference type="EMBL" id="BT058004">
    <property type="protein sequence ID" value="ACM16714.1"/>
    <property type="molecule type" value="mRNA"/>
</dbReference>
<dbReference type="RefSeq" id="NP_649430.1">
    <property type="nucleotide sequence ID" value="NM_141173.2"/>
</dbReference>
<dbReference type="SMR" id="Q9VNP5"/>
<dbReference type="BioGRID" id="65740">
    <property type="interactions" value="1"/>
</dbReference>
<dbReference type="FunCoup" id="Q9VNP5">
    <property type="interactions" value="6"/>
</dbReference>
<dbReference type="IntAct" id="Q9VNP5">
    <property type="interactions" value="4"/>
</dbReference>
<dbReference type="MINT" id="Q9VNP5"/>
<dbReference type="STRING" id="7227.FBpp0078210"/>
<dbReference type="PaxDb" id="7227-FBpp0078210"/>
<dbReference type="DNASU" id="40512"/>
<dbReference type="EnsemblMetazoa" id="FBtr0078559">
    <property type="protein sequence ID" value="FBpp0078210"/>
    <property type="gene ID" value="FBgn0037205"/>
</dbReference>
<dbReference type="GeneID" id="40512"/>
<dbReference type="KEGG" id="dme:Dmel_CG11133"/>
<dbReference type="UCSC" id="CG11133-RA">
    <property type="organism name" value="d. melanogaster"/>
</dbReference>
<dbReference type="AGR" id="FB:FBgn0037205"/>
<dbReference type="CTD" id="40512"/>
<dbReference type="FlyBase" id="FBgn0037205">
    <property type="gene designation" value="BoYb"/>
</dbReference>
<dbReference type="VEuPathDB" id="VectorBase:FBgn0037205"/>
<dbReference type="eggNOG" id="KOG0334">
    <property type="taxonomic scope" value="Eukaryota"/>
</dbReference>
<dbReference type="GeneTree" id="ENSGT00940000167250"/>
<dbReference type="HOGENOM" id="CLU_286417_0_0_1"/>
<dbReference type="InParanoid" id="Q9VNP5"/>
<dbReference type="OMA" id="HGAMIVG"/>
<dbReference type="OrthoDB" id="249932at2759"/>
<dbReference type="PhylomeDB" id="Q9VNP5"/>
<dbReference type="BioGRID-ORCS" id="40512">
    <property type="hits" value="0 hits in 1 CRISPR screen"/>
</dbReference>
<dbReference type="GenomeRNAi" id="40512"/>
<dbReference type="PRO" id="PR:Q9VNP5"/>
<dbReference type="Proteomes" id="UP000000803">
    <property type="component" value="Chromosome 3L"/>
</dbReference>
<dbReference type="Bgee" id="FBgn0037205">
    <property type="expression patterns" value="Expressed in ovary and 13 other cell types or tissues"/>
</dbReference>
<dbReference type="ExpressionAtlas" id="Q9VNP5">
    <property type="expression patterns" value="baseline and differential"/>
</dbReference>
<dbReference type="GO" id="GO:0070725">
    <property type="term" value="C:Yb body"/>
    <property type="evidence" value="ECO:0000314"/>
    <property type="project" value="FlyBase"/>
</dbReference>
<dbReference type="GO" id="GO:0005524">
    <property type="term" value="F:ATP binding"/>
    <property type="evidence" value="ECO:0007669"/>
    <property type="project" value="UniProtKB-KW"/>
</dbReference>
<dbReference type="GO" id="GO:0016887">
    <property type="term" value="F:ATP hydrolysis activity"/>
    <property type="evidence" value="ECO:0007669"/>
    <property type="project" value="RHEA"/>
</dbReference>
<dbReference type="GO" id="GO:0003676">
    <property type="term" value="F:nucleic acid binding"/>
    <property type="evidence" value="ECO:0007669"/>
    <property type="project" value="InterPro"/>
</dbReference>
<dbReference type="GO" id="GO:0003724">
    <property type="term" value="F:RNA helicase activity"/>
    <property type="evidence" value="ECO:0007669"/>
    <property type="project" value="UniProtKB-EC"/>
</dbReference>
<dbReference type="GO" id="GO:0042078">
    <property type="term" value="P:germ-line stem cell division"/>
    <property type="evidence" value="ECO:0000318"/>
    <property type="project" value="GO_Central"/>
</dbReference>
<dbReference type="GO" id="GO:0051321">
    <property type="term" value="P:meiotic cell cycle"/>
    <property type="evidence" value="ECO:0007669"/>
    <property type="project" value="UniProtKB-KW"/>
</dbReference>
<dbReference type="GO" id="GO:0140990">
    <property type="term" value="P:primary piRNA processing"/>
    <property type="evidence" value="ECO:0000315"/>
    <property type="project" value="FlyBase"/>
</dbReference>
<dbReference type="GO" id="GO:0140965">
    <property type="term" value="P:secondary piRNA processing"/>
    <property type="evidence" value="ECO:0000316"/>
    <property type="project" value="FlyBase"/>
</dbReference>
<dbReference type="FunFam" id="3.40.50.300:FF:003370">
    <property type="entry name" value="Putative ATP-dependent RNA helicase CG14443"/>
    <property type="match status" value="1"/>
</dbReference>
<dbReference type="FunFam" id="3.40.50.300:FF:001416">
    <property type="entry name" value="Tudor domain containing 12"/>
    <property type="match status" value="1"/>
</dbReference>
<dbReference type="Gene3D" id="3.40.50.300">
    <property type="entry name" value="P-loop containing nucleotide triphosphate hydrolases"/>
    <property type="match status" value="2"/>
</dbReference>
<dbReference type="InterPro" id="IPR011545">
    <property type="entry name" value="DEAD/DEAH_box_helicase_dom"/>
</dbReference>
<dbReference type="InterPro" id="IPR014001">
    <property type="entry name" value="Helicase_ATP-bd"/>
</dbReference>
<dbReference type="InterPro" id="IPR027417">
    <property type="entry name" value="P-loop_NTPase"/>
</dbReference>
<dbReference type="PANTHER" id="PTHR22655">
    <property type="entry name" value="ATP-DEPENDENT RNA HELICASE TDRD12-RELATED"/>
    <property type="match status" value="1"/>
</dbReference>
<dbReference type="PANTHER" id="PTHR22655:SF2">
    <property type="entry name" value="ATP-DEPENDENT RNA HELICASE TDRD12-RELATED"/>
    <property type="match status" value="1"/>
</dbReference>
<dbReference type="Pfam" id="PF00270">
    <property type="entry name" value="DEAD"/>
    <property type="match status" value="1"/>
</dbReference>
<dbReference type="SUPFAM" id="SSF52540">
    <property type="entry name" value="P-loop containing nucleoside triphosphate hydrolases"/>
    <property type="match status" value="2"/>
</dbReference>
<dbReference type="PROSITE" id="PS51192">
    <property type="entry name" value="HELICASE_ATP_BIND_1"/>
    <property type="match status" value="1"/>
</dbReference>
<dbReference type="PROSITE" id="PS51195">
    <property type="entry name" value="Q_MOTIF"/>
    <property type="match status" value="1"/>
</dbReference>
<protein>
    <recommendedName>
        <fullName>Putative ATP-dependent RNA helicase BoYb</fullName>
        <ecNumber>3.6.4.13</ecNumber>
    </recommendedName>
    <alternativeName>
        <fullName>Brother of Yb</fullName>
    </alternativeName>
</protein>
<comment type="function">
    <text evidence="3">Involved in primary piRNA biogenesis in germline cells.</text>
</comment>
<comment type="catalytic activity">
    <reaction>
        <text>ATP + H2O = ADP + phosphate + H(+)</text>
        <dbReference type="Rhea" id="RHEA:13065"/>
        <dbReference type="ChEBI" id="CHEBI:15377"/>
        <dbReference type="ChEBI" id="CHEBI:15378"/>
        <dbReference type="ChEBI" id="CHEBI:30616"/>
        <dbReference type="ChEBI" id="CHEBI:43474"/>
        <dbReference type="ChEBI" id="CHEBI:456216"/>
        <dbReference type="EC" id="3.6.4.13"/>
    </reaction>
</comment>
<comment type="subcellular location">
    <subcellularLocation>
        <location evidence="3">Cytoplasm</location>
    </subcellularLocation>
    <text>Localizes to Yb bodies.</text>
</comment>
<evidence type="ECO:0000255" key="1">
    <source>
        <dbReference type="PROSITE-ProRule" id="PRU00541"/>
    </source>
</evidence>
<evidence type="ECO:0000256" key="2">
    <source>
        <dbReference type="SAM" id="MobiDB-lite"/>
    </source>
</evidence>
<evidence type="ECO:0000269" key="3">
    <source>
    </source>
</evidence>
<evidence type="ECO:0000305" key="4"/>
<keyword id="KW-0067">ATP-binding</keyword>
<keyword id="KW-0963">Cytoplasm</keyword>
<keyword id="KW-0347">Helicase</keyword>
<keyword id="KW-0378">Hydrolase</keyword>
<keyword id="KW-0469">Meiosis</keyword>
<keyword id="KW-0547">Nucleotide-binding</keyword>
<keyword id="KW-1185">Reference proteome</keyword>
<keyword id="KW-0677">Repeat</keyword>
<feature type="chain" id="PRO_0000425214" description="Putative ATP-dependent RNA helicase BoYb">
    <location>
        <begin position="1"/>
        <end position="1059"/>
    </location>
</feature>
<feature type="domain" description="Helicase ATP-binding" evidence="1">
    <location>
        <begin position="87"/>
        <end position="284"/>
    </location>
</feature>
<feature type="domain" description="Tudor">
    <location>
        <begin position="575"/>
        <end position="639"/>
    </location>
</feature>
<feature type="region of interest" description="Disordered" evidence="2">
    <location>
        <begin position="756"/>
        <end position="787"/>
    </location>
</feature>
<feature type="short sequence motif" description="Q motif">
    <location>
        <begin position="54"/>
        <end position="82"/>
    </location>
</feature>
<feature type="short sequence motif" description="DEAD box">
    <location>
        <begin position="230"/>
        <end position="233"/>
    </location>
</feature>
<feature type="compositionally biased region" description="Basic and acidic residues" evidence="2">
    <location>
        <begin position="757"/>
        <end position="775"/>
    </location>
</feature>
<feature type="binding site" evidence="1">
    <location>
        <begin position="100"/>
        <end position="107"/>
    </location>
    <ligand>
        <name>ATP</name>
        <dbReference type="ChEBI" id="CHEBI:30616"/>
    </ligand>
</feature>
<feature type="sequence conflict" description="In Ref. 3; AAQ22553." evidence="4" ref="3">
    <original>V</original>
    <variation>A</variation>
    <location>
        <position position="1045"/>
    </location>
</feature>
<proteinExistence type="evidence at transcript level"/>
<name>BOYB_DROME</name>
<sequence>MIKISDEKTWQSSRDSVYEVGDSYSGQNANRPLVATNCSEYAVAHANCQLRPVRRFAEVSLLPDILETMRNLGLNRLLRLQSYTWPHLAGGSGHGAMIVGSPASGRTFAYIPPVCHAVSRALMDFTGQCEDVEHDISQPDRYGPIALILVPDLRRVHQVSAMCLALLRKAHKNDSVTLALNVSSTKSSQFFLKLLNGVGCLVATPAQLVWFWQEAPGLMRFPCLQFLVYDDVDLMSREQLQDVQQVLQEILPLSHSPQVVMVSKSYCHTLMSKLRAVNDKPALVFGDILEAALYGGTRIRISIMRSEAKANAVVQMLQQCSPEEFRTVIFCSDDGDMQCLVAALEVQHYSCLPYYQTADLEVRQQVHSWQARSNGVILLCTDNCPELDIRDAHTIIHHSMSHSWSKFKLRHLKISDNLCNMVKPTASIVKKPLYSLVLLDDNNHRQLPRLVDFLQLHQKVDHRLVEVAKRIRQELGKARNDQHQLCDQILVLGKCYDPVCESRHRLSHIDRRPDYLPASGDVKVQLVKVYSPTHFCVRLLEHLPPKGTWRMMEYSAVQEFRMQLTQIKEPRRYWPPVAGAICMYHTTFTKERVRVLKVAAIKNTNIVQSDLTVKLQALDVDTRIFSTNCGKLFECPEALQQEAPLACDLRLPGWVPYFGERSWTEENIRNVNLILTQLPKDHFLQAKILFVAAGTLFVQDLVAIMYADQFKAHVRHLSLARRLVEATLVKRSENAAEMIREFFAEVIIEDDIDENVQDSKEKANSKPHEKMKGKMTDQPAKLQSQPPLSGRCLRLANMAHESVKENQLHQELQERRYETPEIPHQSNESDIPQSNEDRFSQLYECIMNCASLQLEDESKPAKHPDHVLSESVEFHKIMTNEDATPDHTQEKTALLLLPNNVARPSVTYYQTMTTLEFQVFLPEDDHDYKALLLGAQLFFRAISKSSDLILQFIMTLRFPYSSMSHNIRGRTVYISVKKLLALIDPLAFREYRFLKPNHDLFDKVDKQLQETQNRLVRFLEDMNYVKRNFEGQEKRETSEDEEVNVEGIERPDCHKIWDL</sequence>
<reference key="1">
    <citation type="journal article" date="2000" name="Science">
        <title>The genome sequence of Drosophila melanogaster.</title>
        <authorList>
            <person name="Adams M.D."/>
            <person name="Celniker S.E."/>
            <person name="Holt R.A."/>
            <person name="Evans C.A."/>
            <person name="Gocayne J.D."/>
            <person name="Amanatides P.G."/>
            <person name="Scherer S.E."/>
            <person name="Li P.W."/>
            <person name="Hoskins R.A."/>
            <person name="Galle R.F."/>
            <person name="George R.A."/>
            <person name="Lewis S.E."/>
            <person name="Richards S."/>
            <person name="Ashburner M."/>
            <person name="Henderson S.N."/>
            <person name="Sutton G.G."/>
            <person name="Wortman J.R."/>
            <person name="Yandell M.D."/>
            <person name="Zhang Q."/>
            <person name="Chen L.X."/>
            <person name="Brandon R.C."/>
            <person name="Rogers Y.-H.C."/>
            <person name="Blazej R.G."/>
            <person name="Champe M."/>
            <person name="Pfeiffer B.D."/>
            <person name="Wan K.H."/>
            <person name="Doyle C."/>
            <person name="Baxter E.G."/>
            <person name="Helt G."/>
            <person name="Nelson C.R."/>
            <person name="Miklos G.L.G."/>
            <person name="Abril J.F."/>
            <person name="Agbayani A."/>
            <person name="An H.-J."/>
            <person name="Andrews-Pfannkoch C."/>
            <person name="Baldwin D."/>
            <person name="Ballew R.M."/>
            <person name="Basu A."/>
            <person name="Baxendale J."/>
            <person name="Bayraktaroglu L."/>
            <person name="Beasley E.M."/>
            <person name="Beeson K.Y."/>
            <person name="Benos P.V."/>
            <person name="Berman B.P."/>
            <person name="Bhandari D."/>
            <person name="Bolshakov S."/>
            <person name="Borkova D."/>
            <person name="Botchan M.R."/>
            <person name="Bouck J."/>
            <person name="Brokstein P."/>
            <person name="Brottier P."/>
            <person name="Burtis K.C."/>
            <person name="Busam D.A."/>
            <person name="Butler H."/>
            <person name="Cadieu E."/>
            <person name="Center A."/>
            <person name="Chandra I."/>
            <person name="Cherry J.M."/>
            <person name="Cawley S."/>
            <person name="Dahlke C."/>
            <person name="Davenport L.B."/>
            <person name="Davies P."/>
            <person name="de Pablos B."/>
            <person name="Delcher A."/>
            <person name="Deng Z."/>
            <person name="Mays A.D."/>
            <person name="Dew I."/>
            <person name="Dietz S.M."/>
            <person name="Dodson K."/>
            <person name="Doup L.E."/>
            <person name="Downes M."/>
            <person name="Dugan-Rocha S."/>
            <person name="Dunkov B.C."/>
            <person name="Dunn P."/>
            <person name="Durbin K.J."/>
            <person name="Evangelista C.C."/>
            <person name="Ferraz C."/>
            <person name="Ferriera S."/>
            <person name="Fleischmann W."/>
            <person name="Fosler C."/>
            <person name="Gabrielian A.E."/>
            <person name="Garg N.S."/>
            <person name="Gelbart W.M."/>
            <person name="Glasser K."/>
            <person name="Glodek A."/>
            <person name="Gong F."/>
            <person name="Gorrell J.H."/>
            <person name="Gu Z."/>
            <person name="Guan P."/>
            <person name="Harris M."/>
            <person name="Harris N.L."/>
            <person name="Harvey D.A."/>
            <person name="Heiman T.J."/>
            <person name="Hernandez J.R."/>
            <person name="Houck J."/>
            <person name="Hostin D."/>
            <person name="Houston K.A."/>
            <person name="Howland T.J."/>
            <person name="Wei M.-H."/>
            <person name="Ibegwam C."/>
            <person name="Jalali M."/>
            <person name="Kalush F."/>
            <person name="Karpen G.H."/>
            <person name="Ke Z."/>
            <person name="Kennison J.A."/>
            <person name="Ketchum K.A."/>
            <person name="Kimmel B.E."/>
            <person name="Kodira C.D."/>
            <person name="Kraft C.L."/>
            <person name="Kravitz S."/>
            <person name="Kulp D."/>
            <person name="Lai Z."/>
            <person name="Lasko P."/>
            <person name="Lei Y."/>
            <person name="Levitsky A.A."/>
            <person name="Li J.H."/>
            <person name="Li Z."/>
            <person name="Liang Y."/>
            <person name="Lin X."/>
            <person name="Liu X."/>
            <person name="Mattei B."/>
            <person name="McIntosh T.C."/>
            <person name="McLeod M.P."/>
            <person name="McPherson D."/>
            <person name="Merkulov G."/>
            <person name="Milshina N.V."/>
            <person name="Mobarry C."/>
            <person name="Morris J."/>
            <person name="Moshrefi A."/>
            <person name="Mount S.M."/>
            <person name="Moy M."/>
            <person name="Murphy B."/>
            <person name="Murphy L."/>
            <person name="Muzny D.M."/>
            <person name="Nelson D.L."/>
            <person name="Nelson D.R."/>
            <person name="Nelson K.A."/>
            <person name="Nixon K."/>
            <person name="Nusskern D.R."/>
            <person name="Pacleb J.M."/>
            <person name="Palazzolo M."/>
            <person name="Pittman G.S."/>
            <person name="Pan S."/>
            <person name="Pollard J."/>
            <person name="Puri V."/>
            <person name="Reese M.G."/>
            <person name="Reinert K."/>
            <person name="Remington K."/>
            <person name="Saunders R.D.C."/>
            <person name="Scheeler F."/>
            <person name="Shen H."/>
            <person name="Shue B.C."/>
            <person name="Siden-Kiamos I."/>
            <person name="Simpson M."/>
            <person name="Skupski M.P."/>
            <person name="Smith T.J."/>
            <person name="Spier E."/>
            <person name="Spradling A.C."/>
            <person name="Stapleton M."/>
            <person name="Strong R."/>
            <person name="Sun E."/>
            <person name="Svirskas R."/>
            <person name="Tector C."/>
            <person name="Turner R."/>
            <person name="Venter E."/>
            <person name="Wang A.H."/>
            <person name="Wang X."/>
            <person name="Wang Z.-Y."/>
            <person name="Wassarman D.A."/>
            <person name="Weinstock G.M."/>
            <person name="Weissenbach J."/>
            <person name="Williams S.M."/>
            <person name="Woodage T."/>
            <person name="Worley K.C."/>
            <person name="Wu D."/>
            <person name="Yang S."/>
            <person name="Yao Q.A."/>
            <person name="Ye J."/>
            <person name="Yeh R.-F."/>
            <person name="Zaveri J.S."/>
            <person name="Zhan M."/>
            <person name="Zhang G."/>
            <person name="Zhao Q."/>
            <person name="Zheng L."/>
            <person name="Zheng X.H."/>
            <person name="Zhong F.N."/>
            <person name="Zhong W."/>
            <person name="Zhou X."/>
            <person name="Zhu S.C."/>
            <person name="Zhu X."/>
            <person name="Smith H.O."/>
            <person name="Gibbs R.A."/>
            <person name="Myers E.W."/>
            <person name="Rubin G.M."/>
            <person name="Venter J.C."/>
        </authorList>
    </citation>
    <scope>NUCLEOTIDE SEQUENCE [LARGE SCALE GENOMIC DNA]</scope>
    <source>
        <strain>Berkeley</strain>
    </source>
</reference>
<reference key="2">
    <citation type="journal article" date="2002" name="Genome Biol.">
        <title>Annotation of the Drosophila melanogaster euchromatic genome: a systematic review.</title>
        <authorList>
            <person name="Misra S."/>
            <person name="Crosby M.A."/>
            <person name="Mungall C.J."/>
            <person name="Matthews B.B."/>
            <person name="Campbell K.S."/>
            <person name="Hradecky P."/>
            <person name="Huang Y."/>
            <person name="Kaminker J.S."/>
            <person name="Millburn G.H."/>
            <person name="Prochnik S.E."/>
            <person name="Smith C.D."/>
            <person name="Tupy J.L."/>
            <person name="Whitfield E.J."/>
            <person name="Bayraktaroglu L."/>
            <person name="Berman B.P."/>
            <person name="Bettencourt B.R."/>
            <person name="Celniker S.E."/>
            <person name="de Grey A.D.N.J."/>
            <person name="Drysdale R.A."/>
            <person name="Harris N.L."/>
            <person name="Richter J."/>
            <person name="Russo S."/>
            <person name="Schroeder A.J."/>
            <person name="Shu S.Q."/>
            <person name="Stapleton M."/>
            <person name="Yamada C."/>
            <person name="Ashburner M."/>
            <person name="Gelbart W.M."/>
            <person name="Rubin G.M."/>
            <person name="Lewis S.E."/>
        </authorList>
    </citation>
    <scope>GENOME REANNOTATION</scope>
    <source>
        <strain>Berkeley</strain>
    </source>
</reference>
<reference key="3">
    <citation type="submission" date="2009-01" db="EMBL/GenBank/DDBJ databases">
        <authorList>
            <person name="Carlson J."/>
            <person name="Booth B."/>
            <person name="Frise E."/>
            <person name="Park S."/>
            <person name="Wan K."/>
            <person name="Yu C."/>
            <person name="Celniker S."/>
        </authorList>
    </citation>
    <scope>NUCLEOTIDE SEQUENCE [LARGE SCALE MRNA]</scope>
    <source>
        <strain>Berkeley</strain>
        <tissue>Embryo</tissue>
    </source>
</reference>
<reference key="4">
    <citation type="journal article" date="2011" name="EMBO J.">
        <title>A systematic analysis of Drosophila TUDOR domain-containing proteins identifies Vreteno and the Tdrd12 family as essential primary piRNA pathway factors.</title>
        <authorList>
            <person name="Handler D."/>
            <person name="Olivieri D."/>
            <person name="Novatchkova M."/>
            <person name="Gruber F.S."/>
            <person name="Meixner K."/>
            <person name="Mechtler K."/>
            <person name="Stark A."/>
            <person name="Sachidanandam R."/>
            <person name="Brennecke J."/>
        </authorList>
    </citation>
    <scope>FUNCTION</scope>
    <scope>SUBCELLULAR LOCATION</scope>
</reference>
<accession>Q9VNP5</accession>
<accession>Q7YTZ8</accession>
<gene>
    <name type="primary">BoYb</name>
    <name type="ORF">CG11133</name>
</gene>
<organism>
    <name type="scientific">Drosophila melanogaster</name>
    <name type="common">Fruit fly</name>
    <dbReference type="NCBI Taxonomy" id="7227"/>
    <lineage>
        <taxon>Eukaryota</taxon>
        <taxon>Metazoa</taxon>
        <taxon>Ecdysozoa</taxon>
        <taxon>Arthropoda</taxon>
        <taxon>Hexapoda</taxon>
        <taxon>Insecta</taxon>
        <taxon>Pterygota</taxon>
        <taxon>Neoptera</taxon>
        <taxon>Endopterygota</taxon>
        <taxon>Diptera</taxon>
        <taxon>Brachycera</taxon>
        <taxon>Muscomorpha</taxon>
        <taxon>Ephydroidea</taxon>
        <taxon>Drosophilidae</taxon>
        <taxon>Drosophila</taxon>
        <taxon>Sophophora</taxon>
    </lineage>
</organism>